<gene>
    <name type="primary">MTPAP</name>
    <name type="synonym">PAPD1</name>
</gene>
<keyword id="KW-0002">3D-structure</keyword>
<keyword id="KW-0007">Acetylation</keyword>
<keyword id="KW-0025">Alternative splicing</keyword>
<keyword id="KW-0067">ATP-binding</keyword>
<keyword id="KW-0963">Cytoplasm</keyword>
<keyword id="KW-0225">Disease variant</keyword>
<keyword id="KW-0460">Magnesium</keyword>
<keyword id="KW-0464">Manganese</keyword>
<keyword id="KW-0479">Metal-binding</keyword>
<keyword id="KW-0496">Mitochondrion</keyword>
<keyword id="KW-0507">mRNA processing</keyword>
<keyword id="KW-0523">Neurodegeneration</keyword>
<keyword id="KW-0547">Nucleotide-binding</keyword>
<keyword id="KW-0548">Nucleotidyltransferase</keyword>
<keyword id="KW-1267">Proteomics identification</keyword>
<keyword id="KW-1185">Reference proteome</keyword>
<keyword id="KW-0694">RNA-binding</keyword>
<keyword id="KW-0804">Transcription</keyword>
<keyword id="KW-0808">Transferase</keyword>
<keyword id="KW-0809">Transit peptide</keyword>
<feature type="transit peptide" description="Mitochondrion" evidence="2">
    <location>
        <begin position="1"/>
        <end position="37"/>
    </location>
</feature>
<feature type="chain" id="PRO_0000250689" description="Poly(A) RNA polymerase, mitochondrial">
    <location>
        <begin position="38"/>
        <end position="582"/>
    </location>
</feature>
<feature type="domain" description="PAP-associated">
    <location>
        <begin position="437"/>
        <end position="483"/>
    </location>
</feature>
<feature type="binding site" evidence="2">
    <location>
        <begin position="107"/>
        <end position="109"/>
    </location>
    <ligand>
        <name>ATP</name>
        <dbReference type="ChEBI" id="CHEBI:30616"/>
    </ligand>
</feature>
<feature type="binding site" evidence="2">
    <location>
        <begin position="241"/>
        <end position="242"/>
    </location>
    <ligand>
        <name>ATP</name>
        <dbReference type="ChEBI" id="CHEBI:30616"/>
    </ligand>
</feature>
<feature type="binding site" evidence="1">
    <location>
        <position position="243"/>
    </location>
    <ligand>
        <name>Mg(2+)</name>
        <dbReference type="ChEBI" id="CHEBI:18420"/>
        <note>catalytic</note>
    </ligand>
</feature>
<feature type="binding site" evidence="1">
    <location>
        <position position="245"/>
    </location>
    <ligand>
        <name>Mg(2+)</name>
        <dbReference type="ChEBI" id="CHEBI:18420"/>
        <note>catalytic</note>
    </ligand>
</feature>
<feature type="modified residue" description="N6-acetyllysine" evidence="11">
    <location>
        <position position="90"/>
    </location>
</feature>
<feature type="splice variant" id="VSP_020724" description="In isoform 2." evidence="9">
    <original>MAVPGVGLLTRLNLCARRRTRVQRPIVRLLSCPGTVAKDLRRDEQPSGSVET</original>
    <variation>MAWAKKVGGRAGQGRSLSRCDPIILDPEWLYGPPEGEGGPEGVGGETRASIHPPLRTGRHHQKVNHNIRGPEGSAKDAAPGGGGHHQAGPGQRGDEDGALQHLCGGGGGVGVSVGRGTGTSVAAEHPSLQVKLLELQELVLRLAGDHNEGHGKFLAAAQNPADDPAPGAPAPQELGAADKQG</variation>
    <location>
        <begin position="1"/>
        <end position="52"/>
    </location>
</feature>
<feature type="sequence variant" id="VAR_027601" description="In dbSNP:rs1047991.">
    <original>R</original>
    <variation>C</variation>
    <location>
        <position position="162"/>
    </location>
</feature>
<feature type="sequence variant" id="VAR_027602" description="In dbSNP:rs17855118." evidence="3">
    <original>Y</original>
    <variation>H</variation>
    <location>
        <position position="221"/>
    </location>
</feature>
<feature type="sequence variant" id="VAR_027603" description="In dbSNP:rs17857517." evidence="3">
    <original>C</original>
    <variation>R</variation>
    <location>
        <position position="419"/>
    </location>
</feature>
<feature type="sequence variant" id="VAR_064907" description="In SPAX4; dbSNP:rs267606900." evidence="7">
    <original>N</original>
    <variation>D</variation>
    <location>
        <position position="478"/>
    </location>
</feature>
<feature type="sequence variant" id="VAR_027604" description="In dbSNP:rs17855116." evidence="3">
    <original>S</original>
    <variation>N</variation>
    <location>
        <position position="546"/>
    </location>
</feature>
<feature type="mutagenesis site" description="Reduces dimerization." evidence="8">
    <original>YF</original>
    <variation>AA</variation>
    <location>
        <begin position="221"/>
        <end position="222"/>
    </location>
</feature>
<feature type="mutagenesis site" description="Reduced enzyme activity." evidence="8">
    <original>F</original>
    <variation>A</variation>
    <location>
        <position position="230"/>
    </location>
</feature>
<feature type="mutagenesis site" description="No effect on dimerization. Loss of dimerization and of enzyme activity; when associated with 294-AAAA-297." evidence="8">
    <original>HKI</original>
    <variation>AAA</variation>
    <location>
        <begin position="259"/>
        <end position="261"/>
    </location>
</feature>
<feature type="mutagenesis site" description="Reduced dimerization. Loss of dimerization and of enzyme activity; when associated with 259-AAA-261." evidence="8">
    <original>HFGP</original>
    <variation>AAGA</variation>
    <location>
        <begin position="294"/>
        <end position="297"/>
    </location>
</feature>
<feature type="mutagenesis site" description="Reduced enzyme activity." evidence="8">
    <original>L</original>
    <variation>A</variation>
    <location>
        <position position="312"/>
    </location>
</feature>
<feature type="mutagenesis site" description="Loss of enzyme activity." evidence="8">
    <original>D</original>
    <variation>A</variation>
    <location>
        <position position="325"/>
    </location>
</feature>
<feature type="mutagenesis site" description="Reduced enzyme activity." evidence="8">
    <original>F</original>
    <variation>A</variation>
    <location>
        <position position="378"/>
    </location>
</feature>
<feature type="sequence conflict" description="In Ref. 4; BAB13981." evidence="10" ref="4">
    <original>W</original>
    <variation>L</variation>
    <location>
        <position position="507"/>
    </location>
</feature>
<feature type="sequence conflict" description="In Ref. 4; BAB13981." evidence="10" ref="4">
    <original>V</original>
    <variation>A</variation>
    <location>
        <position position="554"/>
    </location>
</feature>
<feature type="helix" evidence="12">
    <location>
        <begin position="64"/>
        <end position="75"/>
    </location>
</feature>
<feature type="strand" evidence="12">
    <location>
        <begin position="77"/>
        <end position="82"/>
    </location>
</feature>
<feature type="helix" evidence="12">
    <location>
        <begin position="90"/>
        <end position="95"/>
    </location>
</feature>
<feature type="helix" evidence="12">
    <location>
        <begin position="96"/>
        <end position="98"/>
    </location>
</feature>
<feature type="strand" evidence="12">
    <location>
        <begin position="104"/>
        <end position="107"/>
    </location>
</feature>
<feature type="strand" evidence="12">
    <location>
        <begin position="109"/>
        <end position="117"/>
    </location>
</feature>
<feature type="helix" evidence="12">
    <location>
        <begin position="125"/>
        <end position="128"/>
    </location>
</feature>
<feature type="helix" evidence="12">
    <location>
        <begin position="174"/>
        <end position="180"/>
    </location>
</feature>
<feature type="strand" evidence="12">
    <location>
        <begin position="183"/>
        <end position="185"/>
    </location>
</feature>
<feature type="helix" evidence="12">
    <location>
        <begin position="186"/>
        <end position="197"/>
    </location>
</feature>
<feature type="helix" evidence="12">
    <location>
        <begin position="201"/>
        <end position="218"/>
    </location>
</feature>
<feature type="turn" evidence="12">
    <location>
        <begin position="219"/>
        <end position="221"/>
    </location>
</feature>
<feature type="strand" evidence="12">
    <location>
        <begin position="226"/>
        <end position="230"/>
    </location>
</feature>
<feature type="helix" evidence="12">
    <location>
        <begin position="231"/>
        <end position="233"/>
    </location>
</feature>
<feature type="strand" evidence="12">
    <location>
        <begin position="244"/>
        <end position="249"/>
    </location>
</feature>
<feature type="helix" evidence="12">
    <location>
        <begin position="277"/>
        <end position="294"/>
    </location>
</feature>
<feature type="strand" evidence="12">
    <location>
        <begin position="299"/>
        <end position="305"/>
    </location>
</feature>
<feature type="strand" evidence="12">
    <location>
        <begin position="307"/>
        <end position="310"/>
    </location>
</feature>
<feature type="strand" evidence="12">
    <location>
        <begin position="312"/>
        <end position="317"/>
    </location>
</feature>
<feature type="turn" evidence="12">
    <location>
        <begin position="318"/>
        <end position="320"/>
    </location>
</feature>
<feature type="strand" evidence="12">
    <location>
        <begin position="323"/>
        <end position="327"/>
    </location>
</feature>
<feature type="helix" evidence="12">
    <location>
        <begin position="333"/>
        <end position="344"/>
    </location>
</feature>
<feature type="helix" evidence="12">
    <location>
        <begin position="348"/>
        <end position="363"/>
    </location>
</feature>
<feature type="helix" evidence="12">
    <location>
        <begin position="377"/>
        <end position="389"/>
    </location>
</feature>
<feature type="helix" evidence="12">
    <location>
        <begin position="403"/>
        <end position="406"/>
    </location>
</feature>
<feature type="helix" evidence="12">
    <location>
        <begin position="437"/>
        <end position="447"/>
    </location>
</feature>
<feature type="helix" evidence="12">
    <location>
        <begin position="448"/>
        <end position="450"/>
    </location>
</feature>
<feature type="turn" evidence="12">
    <location>
        <begin position="482"/>
        <end position="484"/>
    </location>
</feature>
<feature type="helix" evidence="12">
    <location>
        <begin position="492"/>
        <end position="510"/>
    </location>
</feature>
<feature type="helix" evidence="12">
    <location>
        <begin position="528"/>
        <end position="530"/>
    </location>
</feature>
<sequence>MAVPGVGLLTRLNLCARRRTRVQRPIVRLLSCPGTVAKDLRRDEQPSGSVETGFEDKIPKRRFSEMQNERREQAQRTVLIHCPEKISENKFLKYLSQFGPINNHFFYESFGLYAVVEFCQKESIGSLQNGTHTPSTAMETAIPFRSRFFNLKLKNQTSERSRVRSSNQLPRSNKQLFELLCYAESIDDQLNTLLKEFQLTEENTKLRYLTCSLIEDMAAAYFPDCIVRPFGSSVNTFGKLGCDLDMFLDLDETRNLSAHKISGNFLMEFQVKNVPSERIATQKILSVLGECLDHFGPGCVGVQKILNARCPLVRFSHQASGFQCDLTTNNRIALTSSELLYIYGALDSRVRALVFSVRCWARAHSLTSSIPGAWITNFSLTMMVIFFLQRRSPPILPTLDSLKTLADAEDKCVIEGNNCTFVRDLSRIKPSQNTETLELLLKEFFEYFGNFAFDKNSINIRQGREQNKPDSSPLYIQNPFETSLNISKNVSQSQLQKFVDLARESAWILQQEDTDRPSISSNRPWGLVSLLLPSAPNRKSFTKKKSNKFAIETVKNLLESLKGNRTENFTKTSGKRTISTQT</sequence>
<proteinExistence type="evidence at protein level"/>
<comment type="function">
    <text evidence="4 5 6 7 8">Polymerase that creates the 3' poly(A) tail of mitochondrial transcripts. Can use all four nucleotides, but has higher activity with ATP and UTP (in vitro). Plays a role in replication-dependent histone mRNA degradation. May be involved in the terminal uridylation of mature histone mRNAs before their degradation is initiated. Might be responsible for the creation of some UAA stop codons which are not encoded in mtDNA.</text>
</comment>
<comment type="catalytic activity">
    <reaction evidence="7 8">
        <text>RNA(n) + ATP = RNA(n)-3'-adenine ribonucleotide + diphosphate</text>
        <dbReference type="Rhea" id="RHEA:11332"/>
        <dbReference type="Rhea" id="RHEA-COMP:14527"/>
        <dbReference type="Rhea" id="RHEA-COMP:17347"/>
        <dbReference type="ChEBI" id="CHEBI:30616"/>
        <dbReference type="ChEBI" id="CHEBI:33019"/>
        <dbReference type="ChEBI" id="CHEBI:140395"/>
        <dbReference type="ChEBI" id="CHEBI:173115"/>
        <dbReference type="EC" id="2.7.7.19"/>
    </reaction>
</comment>
<comment type="cofactor">
    <cofactor evidence="8">
        <name>Mg(2+)</name>
        <dbReference type="ChEBI" id="CHEBI:18420"/>
    </cofactor>
    <cofactor evidence="8">
        <name>Mn(2+)</name>
        <dbReference type="ChEBI" id="CHEBI:29035"/>
    </cofactor>
</comment>
<comment type="biophysicochemical properties">
    <kinetics>
        <KM evidence="8">0.1 mM for ATP</KM>
        <KM evidence="8">0.7 mM for UTP</KM>
    </kinetics>
</comment>
<comment type="subunit">
    <text evidence="8">Homodimer.</text>
</comment>
<comment type="interaction">
    <interactant intactId="EBI-2556166">
        <id>Q9NVV4</id>
    </interactant>
    <interactant intactId="EBI-739580">
        <id>Q13137</id>
        <label>CALCOCO2</label>
    </interactant>
    <organismsDiffer>false</organismsDiffer>
    <experiments>4</experiments>
</comment>
<comment type="interaction">
    <interactant intactId="EBI-2556166">
        <id>Q9NVV4</id>
    </interactant>
    <interactant intactId="EBI-2556166">
        <id>Q9NVV4</id>
        <label>MTPAP</label>
    </interactant>
    <organismsDiffer>false</organismsDiffer>
    <experiments>3</experiments>
</comment>
<comment type="interaction">
    <interactant intactId="EBI-2556166">
        <id>Q9NVV4</id>
    </interactant>
    <interactant intactId="EBI-356402">
        <id>Q9UHD2</id>
        <label>TBK1</label>
    </interactant>
    <organismsDiffer>false</organismsDiffer>
    <experiments>2</experiments>
</comment>
<comment type="interaction">
    <interactant intactId="EBI-2556166">
        <id>Q9NVV4</id>
    </interactant>
    <interactant intactId="EBI-6115874">
        <id>Q9QYP6</id>
        <label>Azi2</label>
    </interactant>
    <organismsDiffer>true</organismsDiffer>
    <experiments>2</experiments>
</comment>
<comment type="subcellular location">
    <subcellularLocation>
        <location evidence="6">Cytoplasm</location>
    </subcellularLocation>
    <subcellularLocation>
        <location evidence="4 5">Mitochondrion</location>
    </subcellularLocation>
</comment>
<comment type="alternative products">
    <event type="alternative splicing"/>
    <isoform>
        <id>Q9NVV4-1</id>
        <name>1</name>
        <sequence type="displayed"/>
    </isoform>
    <isoform>
        <id>Q9NVV4-2</id>
        <name>2</name>
        <sequence type="described" ref="VSP_020724"/>
    </isoform>
</comment>
<comment type="tissue specificity">
    <text evidence="4">Ubiquitous, with stronger expression in tissues with high energy requirements: heart, brain, and skeletal muscle.</text>
</comment>
<comment type="disease" evidence="7">
    <disease id="DI-02952">
        <name>Spastic ataxia 4, autosomal recessive</name>
        <acronym>SPAX4</acronym>
        <description>A slowly progressive neurodegenerative disease characterized by cerebellar ataxia, spastic paraparesis, dysarthria, and optic atrophy.</description>
        <dbReference type="MIM" id="613672"/>
    </disease>
    <text evidence="7">The disease is caused by variants affecting the gene represented in this entry. MTPAP mutations result in a defect of mitochondrial mRNA maturation. Affected individuals exhibit a drastic decrease in poly(A) tail length of mitochondrial mRNA transcripts, including COX1 and RNA14 (PubMed:20970105).</text>
</comment>
<comment type="similarity">
    <text evidence="10">Belongs to the DNA polymerase type-B-like family.</text>
</comment>
<protein>
    <recommendedName>
        <fullName>Poly(A) RNA polymerase, mitochondrial</fullName>
        <shortName>PAP</shortName>
        <ecNumber evidence="7 8">2.7.7.19</ecNumber>
    </recommendedName>
    <alternativeName>
        <fullName>PAP-associated domain-containing protein 1</fullName>
    </alternativeName>
    <alternativeName>
        <fullName>Polynucleotide adenylyltransferase</fullName>
    </alternativeName>
    <alternativeName>
        <fullName>Terminal uridylyltransferase 1</fullName>
        <shortName>TUTase 1</shortName>
    </alternativeName>
    <alternativeName>
        <fullName>mtPAP</fullName>
    </alternativeName>
</protein>
<dbReference type="EC" id="2.7.7.19" evidence="7 8"/>
<dbReference type="EMBL" id="AB194709">
    <property type="protein sequence ID" value="BAD98252.1"/>
    <property type="molecule type" value="mRNA"/>
</dbReference>
<dbReference type="EMBL" id="AY364242">
    <property type="protein sequence ID" value="AAQ76801.1"/>
    <property type="molecule type" value="mRNA"/>
</dbReference>
<dbReference type="EMBL" id="AK001348">
    <property type="protein sequence ID" value="BAA91641.1"/>
    <property type="molecule type" value="mRNA"/>
</dbReference>
<dbReference type="EMBL" id="AK022188">
    <property type="protein sequence ID" value="BAB13981.1"/>
    <property type="molecule type" value="mRNA"/>
</dbReference>
<dbReference type="EMBL" id="AL122121">
    <property type="protein sequence ID" value="CAH56395.1"/>
    <property type="molecule type" value="mRNA"/>
</dbReference>
<dbReference type="EMBL" id="AL161651">
    <property type="status" value="NOT_ANNOTATED_CDS"/>
    <property type="molecule type" value="Genomic_DNA"/>
</dbReference>
<dbReference type="EMBL" id="AL353796">
    <property type="status" value="NOT_ANNOTATED_CDS"/>
    <property type="molecule type" value="Genomic_DNA"/>
</dbReference>
<dbReference type="EMBL" id="CH471072">
    <property type="protein sequence ID" value="EAW86014.1"/>
    <property type="molecule type" value="Genomic_DNA"/>
</dbReference>
<dbReference type="EMBL" id="CH471072">
    <property type="protein sequence ID" value="EAW86015.1"/>
    <property type="molecule type" value="Genomic_DNA"/>
</dbReference>
<dbReference type="EMBL" id="BC061703">
    <property type="protein sequence ID" value="AAH61703.1"/>
    <property type="molecule type" value="mRNA"/>
</dbReference>
<dbReference type="CCDS" id="CCDS7165.1">
    <molecule id="Q9NVV4-1"/>
</dbReference>
<dbReference type="RefSeq" id="NP_060579.3">
    <molecule id="Q9NVV4-1"/>
    <property type="nucleotide sequence ID" value="NM_018109.3"/>
</dbReference>
<dbReference type="PDB" id="3PQ1">
    <property type="method" value="X-ray"/>
    <property type="resolution" value="3.10 A"/>
    <property type="chains" value="A/B=44-134, A/B=172-452, A/B=490-538"/>
</dbReference>
<dbReference type="PDBsum" id="3PQ1"/>
<dbReference type="SMR" id="Q9NVV4"/>
<dbReference type="BioGRID" id="120452">
    <property type="interactions" value="200"/>
</dbReference>
<dbReference type="FunCoup" id="Q9NVV4">
    <property type="interactions" value="4355"/>
</dbReference>
<dbReference type="IntAct" id="Q9NVV4">
    <property type="interactions" value="67"/>
</dbReference>
<dbReference type="MINT" id="Q9NVV4"/>
<dbReference type="STRING" id="9606.ENSP00000263063"/>
<dbReference type="GlyGen" id="Q9NVV4">
    <property type="glycosylation" value="2 sites, 2 N-linked glycans (2 sites)"/>
</dbReference>
<dbReference type="iPTMnet" id="Q9NVV4"/>
<dbReference type="PhosphoSitePlus" id="Q9NVV4"/>
<dbReference type="SwissPalm" id="Q9NVV4"/>
<dbReference type="BioMuta" id="MTPAP"/>
<dbReference type="DMDM" id="74753002"/>
<dbReference type="jPOST" id="Q9NVV4"/>
<dbReference type="MassIVE" id="Q9NVV4"/>
<dbReference type="PaxDb" id="9606-ENSP00000263063"/>
<dbReference type="PeptideAtlas" id="Q9NVV4"/>
<dbReference type="ProteomicsDB" id="82864">
    <molecule id="Q9NVV4-1"/>
</dbReference>
<dbReference type="ProteomicsDB" id="82865">
    <molecule id="Q9NVV4-2"/>
</dbReference>
<dbReference type="Pumba" id="Q9NVV4"/>
<dbReference type="Antibodypedia" id="35309">
    <property type="antibodies" value="108 antibodies from 17 providers"/>
</dbReference>
<dbReference type="DNASU" id="55149"/>
<dbReference type="Ensembl" id="ENST00000263063.9">
    <molecule id="Q9NVV4-1"/>
    <property type="protein sequence ID" value="ENSP00000263063.3"/>
    <property type="gene ID" value="ENSG00000107951.15"/>
</dbReference>
<dbReference type="GeneID" id="55149"/>
<dbReference type="KEGG" id="hsa:55149"/>
<dbReference type="MANE-Select" id="ENST00000263063.9">
    <property type="protein sequence ID" value="ENSP00000263063.3"/>
    <property type="RefSeq nucleotide sequence ID" value="NM_018109.4"/>
    <property type="RefSeq protein sequence ID" value="NP_060579.3"/>
</dbReference>
<dbReference type="UCSC" id="uc001iva.5">
    <molecule id="Q9NVV4-1"/>
    <property type="organism name" value="human"/>
</dbReference>
<dbReference type="AGR" id="HGNC:25532"/>
<dbReference type="CTD" id="55149"/>
<dbReference type="DisGeNET" id="55149"/>
<dbReference type="GeneCards" id="MTPAP"/>
<dbReference type="HGNC" id="HGNC:25532">
    <property type="gene designation" value="MTPAP"/>
</dbReference>
<dbReference type="HPA" id="ENSG00000107951">
    <property type="expression patterns" value="Tissue enhanced (bone)"/>
</dbReference>
<dbReference type="MalaCards" id="MTPAP"/>
<dbReference type="MIM" id="613669">
    <property type="type" value="gene"/>
</dbReference>
<dbReference type="MIM" id="613672">
    <property type="type" value="phenotype"/>
</dbReference>
<dbReference type="neXtProt" id="NX_Q9NVV4"/>
<dbReference type="OpenTargets" id="ENSG00000107951"/>
<dbReference type="Orphanet" id="254343">
    <property type="disease" value="Autosomal recessive spastic ataxia-optic atrophy-dysarthria syndrome"/>
</dbReference>
<dbReference type="PharmGKB" id="PA164723192"/>
<dbReference type="VEuPathDB" id="HostDB:ENSG00000107951"/>
<dbReference type="eggNOG" id="KOG2277">
    <property type="taxonomic scope" value="Eukaryota"/>
</dbReference>
<dbReference type="GeneTree" id="ENSGT00940000158582"/>
<dbReference type="HOGENOM" id="CLU_018757_3_1_1"/>
<dbReference type="InParanoid" id="Q9NVV4"/>
<dbReference type="OMA" id="GKHATKM"/>
<dbReference type="OrthoDB" id="434989at2759"/>
<dbReference type="PAN-GO" id="Q9NVV4">
    <property type="GO annotations" value="3 GO annotations based on evolutionary models"/>
</dbReference>
<dbReference type="PhylomeDB" id="Q9NVV4"/>
<dbReference type="TreeFam" id="TF354308"/>
<dbReference type="BRENDA" id="2.7.7.19">
    <property type="organism ID" value="2681"/>
</dbReference>
<dbReference type="PathwayCommons" id="Q9NVV4"/>
<dbReference type="SABIO-RK" id="Q9NVV4"/>
<dbReference type="SignaLink" id="Q9NVV4"/>
<dbReference type="BioGRID-ORCS" id="55149">
    <property type="hits" value="531 hits in 1171 CRISPR screens"/>
</dbReference>
<dbReference type="CD-CODE" id="5965E019">
    <property type="entry name" value="mtRNA granule"/>
</dbReference>
<dbReference type="ChiTaRS" id="MTPAP">
    <property type="organism name" value="human"/>
</dbReference>
<dbReference type="EvolutionaryTrace" id="Q9NVV4"/>
<dbReference type="GenomeRNAi" id="55149"/>
<dbReference type="Pharos" id="Q9NVV4">
    <property type="development level" value="Tbio"/>
</dbReference>
<dbReference type="PRO" id="PR:Q9NVV4"/>
<dbReference type="Proteomes" id="UP000005640">
    <property type="component" value="Chromosome 10"/>
</dbReference>
<dbReference type="RNAct" id="Q9NVV4">
    <property type="molecule type" value="protein"/>
</dbReference>
<dbReference type="Bgee" id="ENSG00000107951">
    <property type="expression patterns" value="Expressed in oocyte and 199 other cell types or tissues"/>
</dbReference>
<dbReference type="ExpressionAtlas" id="Q9NVV4">
    <property type="expression patterns" value="baseline and differential"/>
</dbReference>
<dbReference type="GO" id="GO:0043231">
    <property type="term" value="C:intracellular membrane-bounded organelle"/>
    <property type="evidence" value="ECO:0000314"/>
    <property type="project" value="HPA"/>
</dbReference>
<dbReference type="GO" id="GO:0005739">
    <property type="term" value="C:mitochondrion"/>
    <property type="evidence" value="ECO:0000314"/>
    <property type="project" value="HPA"/>
</dbReference>
<dbReference type="GO" id="GO:0005654">
    <property type="term" value="C:nucleoplasm"/>
    <property type="evidence" value="ECO:0000314"/>
    <property type="project" value="HPA"/>
</dbReference>
<dbReference type="GO" id="GO:0005524">
    <property type="term" value="F:ATP binding"/>
    <property type="evidence" value="ECO:0000314"/>
    <property type="project" value="UniProtKB"/>
</dbReference>
<dbReference type="GO" id="GO:0042802">
    <property type="term" value="F:identical protein binding"/>
    <property type="evidence" value="ECO:0000353"/>
    <property type="project" value="IntAct"/>
</dbReference>
<dbReference type="GO" id="GO:0000287">
    <property type="term" value="F:magnesium ion binding"/>
    <property type="evidence" value="ECO:0000314"/>
    <property type="project" value="UniProtKB"/>
</dbReference>
<dbReference type="GO" id="GO:0030145">
    <property type="term" value="F:manganese ion binding"/>
    <property type="evidence" value="ECO:0000314"/>
    <property type="project" value="UniProtKB"/>
</dbReference>
<dbReference type="GO" id="GO:1990817">
    <property type="term" value="F:poly(A) RNA polymerase activity"/>
    <property type="evidence" value="ECO:0000314"/>
    <property type="project" value="UniProtKB"/>
</dbReference>
<dbReference type="GO" id="GO:0042803">
    <property type="term" value="F:protein homodimerization activity"/>
    <property type="evidence" value="ECO:0000353"/>
    <property type="project" value="UniProtKB"/>
</dbReference>
<dbReference type="GO" id="GO:0003723">
    <property type="term" value="F:RNA binding"/>
    <property type="evidence" value="ECO:0007005"/>
    <property type="project" value="UniProtKB"/>
</dbReference>
<dbReference type="GO" id="GO:0002134">
    <property type="term" value="F:UTP binding"/>
    <property type="evidence" value="ECO:0000314"/>
    <property type="project" value="UniProtKB"/>
</dbReference>
<dbReference type="GO" id="GO:0071044">
    <property type="term" value="P:histone mRNA catabolic process"/>
    <property type="evidence" value="ECO:0000315"/>
    <property type="project" value="UniProtKB"/>
</dbReference>
<dbReference type="GO" id="GO:0000965">
    <property type="term" value="P:mitochondrial RNA 3'-end processing"/>
    <property type="evidence" value="ECO:0000314"/>
    <property type="project" value="UniProtKB"/>
</dbReference>
<dbReference type="GO" id="GO:0006397">
    <property type="term" value="P:mRNA processing"/>
    <property type="evidence" value="ECO:0007669"/>
    <property type="project" value="UniProtKB-KW"/>
</dbReference>
<dbReference type="GO" id="GO:0031123">
    <property type="term" value="P:RNA 3'-end processing"/>
    <property type="evidence" value="ECO:0000318"/>
    <property type="project" value="GO_Central"/>
</dbReference>
<dbReference type="CDD" id="cd05402">
    <property type="entry name" value="NT_PAP_TUTase"/>
    <property type="match status" value="1"/>
</dbReference>
<dbReference type="FunFam" id="3.30.460.10:FF:000087">
    <property type="entry name" value="Poly(A) RNA polymerase, mitochondrial"/>
    <property type="match status" value="1"/>
</dbReference>
<dbReference type="FunFam" id="1.10.1410.10:FF:000010">
    <property type="entry name" value="poly(A) RNA polymerase, mitochondrial"/>
    <property type="match status" value="1"/>
</dbReference>
<dbReference type="Gene3D" id="1.10.1410.10">
    <property type="match status" value="1"/>
</dbReference>
<dbReference type="Gene3D" id="3.30.460.10">
    <property type="entry name" value="Beta Polymerase, domain 2"/>
    <property type="match status" value="1"/>
</dbReference>
<dbReference type="InterPro" id="IPR054708">
    <property type="entry name" value="MTPAP-like_central"/>
</dbReference>
<dbReference type="InterPro" id="IPR043519">
    <property type="entry name" value="NT_sf"/>
</dbReference>
<dbReference type="InterPro" id="IPR002058">
    <property type="entry name" value="PAP_assoc"/>
</dbReference>
<dbReference type="InterPro" id="IPR041252">
    <property type="entry name" value="RL"/>
</dbReference>
<dbReference type="PANTHER" id="PTHR12271">
    <property type="entry name" value="POLY A POLYMERASE CID PAP -RELATED"/>
    <property type="match status" value="1"/>
</dbReference>
<dbReference type="PANTHER" id="PTHR12271:SF133">
    <property type="entry name" value="POLY(A) RNA POLYMERASE, MITOCHONDRIAL"/>
    <property type="match status" value="1"/>
</dbReference>
<dbReference type="Pfam" id="PF22600">
    <property type="entry name" value="MTPAP-like_central"/>
    <property type="match status" value="1"/>
</dbReference>
<dbReference type="Pfam" id="PF03828">
    <property type="entry name" value="PAP_assoc"/>
    <property type="match status" value="1"/>
</dbReference>
<dbReference type="Pfam" id="PF17797">
    <property type="entry name" value="RL"/>
    <property type="match status" value="1"/>
</dbReference>
<dbReference type="SUPFAM" id="SSF81301">
    <property type="entry name" value="Nucleotidyltransferase"/>
    <property type="match status" value="1"/>
</dbReference>
<dbReference type="SUPFAM" id="SSF81631">
    <property type="entry name" value="PAP/OAS1 substrate-binding domain"/>
    <property type="match status" value="1"/>
</dbReference>
<reference key="1">
    <citation type="journal article" date="2004" name="Nucleic Acids Res.">
        <title>Identification of a novel human nuclear-encoded mitochondrial poly(A) polymerase.</title>
        <authorList>
            <person name="Tomecki R."/>
            <person name="Dmochowska A."/>
            <person name="Gewartowski K."/>
            <person name="Dziembowski A."/>
            <person name="Stepien P.P."/>
        </authorList>
    </citation>
    <scope>NUCLEOTIDE SEQUENCE [MRNA] (ISOFORM 1)</scope>
    <scope>FUNCTION</scope>
    <scope>SUBCELLULAR LOCATION</scope>
    <scope>TISSUE SPECIFICITY</scope>
    <source>
        <tissue>Cervix carcinoma</tissue>
    </source>
</reference>
<reference key="2">
    <citation type="journal article" date="2005" name="J. Biol. Chem.">
        <title>Human mitochondrial mRNAs are stabilized with polyadenylation regulated by mitochondria-specific poly(A) polymerase and polynucleotide phosphorylase.</title>
        <authorList>
            <person name="Nagaike T."/>
            <person name="Suzuki T."/>
            <person name="Katoh T."/>
            <person name="Ueda T."/>
        </authorList>
    </citation>
    <scope>NUCLEOTIDE SEQUENCE [MRNA] (ISOFORM 1)</scope>
    <scope>FUNCTION</scope>
    <scope>SUBCELLULAR LOCATION</scope>
</reference>
<reference key="3">
    <citation type="journal article" date="2006" name="BMC Genomics">
        <title>NovelFam3000 -- uncharacterized human protein domains conserved across model organisms.</title>
        <authorList>
            <person name="Kemmer D."/>
            <person name="Podowski R.M."/>
            <person name="Arenillas D."/>
            <person name="Lim J."/>
            <person name="Hodges E."/>
            <person name="Roth P."/>
            <person name="Sonnhammer E.L.L."/>
            <person name="Hoeoeg C."/>
            <person name="Wasserman W.W."/>
        </authorList>
    </citation>
    <scope>NUCLEOTIDE SEQUENCE [MRNA] (ISOFORM 1)</scope>
</reference>
<reference key="4">
    <citation type="journal article" date="2004" name="Nat. Genet.">
        <title>Complete sequencing and characterization of 21,243 full-length human cDNAs.</title>
        <authorList>
            <person name="Ota T."/>
            <person name="Suzuki Y."/>
            <person name="Nishikawa T."/>
            <person name="Otsuki T."/>
            <person name="Sugiyama T."/>
            <person name="Irie R."/>
            <person name="Wakamatsu A."/>
            <person name="Hayashi K."/>
            <person name="Sato H."/>
            <person name="Nagai K."/>
            <person name="Kimura K."/>
            <person name="Makita H."/>
            <person name="Sekine M."/>
            <person name="Obayashi M."/>
            <person name="Nishi T."/>
            <person name="Shibahara T."/>
            <person name="Tanaka T."/>
            <person name="Ishii S."/>
            <person name="Yamamoto J."/>
            <person name="Saito K."/>
            <person name="Kawai Y."/>
            <person name="Isono Y."/>
            <person name="Nakamura Y."/>
            <person name="Nagahari K."/>
            <person name="Murakami K."/>
            <person name="Yasuda T."/>
            <person name="Iwayanagi T."/>
            <person name="Wagatsuma M."/>
            <person name="Shiratori A."/>
            <person name="Sudo H."/>
            <person name="Hosoiri T."/>
            <person name="Kaku Y."/>
            <person name="Kodaira H."/>
            <person name="Kondo H."/>
            <person name="Sugawara M."/>
            <person name="Takahashi M."/>
            <person name="Kanda K."/>
            <person name="Yokoi T."/>
            <person name="Furuya T."/>
            <person name="Kikkawa E."/>
            <person name="Omura Y."/>
            <person name="Abe K."/>
            <person name="Kamihara K."/>
            <person name="Katsuta N."/>
            <person name="Sato K."/>
            <person name="Tanikawa M."/>
            <person name="Yamazaki M."/>
            <person name="Ninomiya K."/>
            <person name="Ishibashi T."/>
            <person name="Yamashita H."/>
            <person name="Murakawa K."/>
            <person name="Fujimori K."/>
            <person name="Tanai H."/>
            <person name="Kimata M."/>
            <person name="Watanabe M."/>
            <person name="Hiraoka S."/>
            <person name="Chiba Y."/>
            <person name="Ishida S."/>
            <person name="Ono Y."/>
            <person name="Takiguchi S."/>
            <person name="Watanabe S."/>
            <person name="Yosida M."/>
            <person name="Hotuta T."/>
            <person name="Kusano J."/>
            <person name="Kanehori K."/>
            <person name="Takahashi-Fujii A."/>
            <person name="Hara H."/>
            <person name="Tanase T.-O."/>
            <person name="Nomura Y."/>
            <person name="Togiya S."/>
            <person name="Komai F."/>
            <person name="Hara R."/>
            <person name="Takeuchi K."/>
            <person name="Arita M."/>
            <person name="Imose N."/>
            <person name="Musashino K."/>
            <person name="Yuuki H."/>
            <person name="Oshima A."/>
            <person name="Sasaki N."/>
            <person name="Aotsuka S."/>
            <person name="Yoshikawa Y."/>
            <person name="Matsunawa H."/>
            <person name="Ichihara T."/>
            <person name="Shiohata N."/>
            <person name="Sano S."/>
            <person name="Moriya S."/>
            <person name="Momiyama H."/>
            <person name="Satoh N."/>
            <person name="Takami S."/>
            <person name="Terashima Y."/>
            <person name="Suzuki O."/>
            <person name="Nakagawa S."/>
            <person name="Senoh A."/>
            <person name="Mizoguchi H."/>
            <person name="Goto Y."/>
            <person name="Shimizu F."/>
            <person name="Wakebe H."/>
            <person name="Hishigaki H."/>
            <person name="Watanabe T."/>
            <person name="Sugiyama A."/>
            <person name="Takemoto M."/>
            <person name="Kawakami B."/>
            <person name="Yamazaki M."/>
            <person name="Watanabe K."/>
            <person name="Kumagai A."/>
            <person name="Itakura S."/>
            <person name="Fukuzumi Y."/>
            <person name="Fujimori Y."/>
            <person name="Komiyama M."/>
            <person name="Tashiro H."/>
            <person name="Tanigami A."/>
            <person name="Fujiwara T."/>
            <person name="Ono T."/>
            <person name="Yamada K."/>
            <person name="Fujii Y."/>
            <person name="Ozaki K."/>
            <person name="Hirao M."/>
            <person name="Ohmori Y."/>
            <person name="Kawabata A."/>
            <person name="Hikiji T."/>
            <person name="Kobatake N."/>
            <person name="Inagaki H."/>
            <person name="Ikema Y."/>
            <person name="Okamoto S."/>
            <person name="Okitani R."/>
            <person name="Kawakami T."/>
            <person name="Noguchi S."/>
            <person name="Itoh T."/>
            <person name="Shigeta K."/>
            <person name="Senba T."/>
            <person name="Matsumura K."/>
            <person name="Nakajima Y."/>
            <person name="Mizuno T."/>
            <person name="Morinaga M."/>
            <person name="Sasaki M."/>
            <person name="Togashi T."/>
            <person name="Oyama M."/>
            <person name="Hata H."/>
            <person name="Watanabe M."/>
            <person name="Komatsu T."/>
            <person name="Mizushima-Sugano J."/>
            <person name="Satoh T."/>
            <person name="Shirai Y."/>
            <person name="Takahashi Y."/>
            <person name="Nakagawa K."/>
            <person name="Okumura K."/>
            <person name="Nagase T."/>
            <person name="Nomura N."/>
            <person name="Kikuchi H."/>
            <person name="Masuho Y."/>
            <person name="Yamashita R."/>
            <person name="Nakai K."/>
            <person name="Yada T."/>
            <person name="Nakamura Y."/>
            <person name="Ohara O."/>
            <person name="Isogai T."/>
            <person name="Sugano S."/>
        </authorList>
    </citation>
    <scope>NUCLEOTIDE SEQUENCE [LARGE SCALE MRNA] (ISOFORM 1)</scope>
    <source>
        <tissue>Brain</tissue>
        <tissue>Mammary gland</tissue>
    </source>
</reference>
<reference key="5">
    <citation type="journal article" date="2007" name="BMC Genomics">
        <title>The full-ORF clone resource of the German cDNA consortium.</title>
        <authorList>
            <person name="Bechtel S."/>
            <person name="Rosenfelder H."/>
            <person name="Duda A."/>
            <person name="Schmidt C.P."/>
            <person name="Ernst U."/>
            <person name="Wellenreuther R."/>
            <person name="Mehrle A."/>
            <person name="Schuster C."/>
            <person name="Bahr A."/>
            <person name="Bloecker H."/>
            <person name="Heubner D."/>
            <person name="Hoerlein A."/>
            <person name="Michel G."/>
            <person name="Wedler H."/>
            <person name="Koehrer K."/>
            <person name="Ottenwaelder B."/>
            <person name="Poustka A."/>
            <person name="Wiemann S."/>
            <person name="Schupp I."/>
        </authorList>
    </citation>
    <scope>NUCLEOTIDE SEQUENCE [LARGE SCALE MRNA] (ISOFORM 2)</scope>
    <source>
        <tissue>Testis</tissue>
    </source>
</reference>
<reference key="6">
    <citation type="journal article" date="2004" name="Nature">
        <title>The DNA sequence and comparative analysis of human chromosome 10.</title>
        <authorList>
            <person name="Deloukas P."/>
            <person name="Earthrowl M.E."/>
            <person name="Grafham D.V."/>
            <person name="Rubenfield M."/>
            <person name="French L."/>
            <person name="Steward C.A."/>
            <person name="Sims S.K."/>
            <person name="Jones M.C."/>
            <person name="Searle S."/>
            <person name="Scott C."/>
            <person name="Howe K."/>
            <person name="Hunt S.E."/>
            <person name="Andrews T.D."/>
            <person name="Gilbert J.G.R."/>
            <person name="Swarbreck D."/>
            <person name="Ashurst J.L."/>
            <person name="Taylor A."/>
            <person name="Battles J."/>
            <person name="Bird C.P."/>
            <person name="Ainscough R."/>
            <person name="Almeida J.P."/>
            <person name="Ashwell R.I.S."/>
            <person name="Ambrose K.D."/>
            <person name="Babbage A.K."/>
            <person name="Bagguley C.L."/>
            <person name="Bailey J."/>
            <person name="Banerjee R."/>
            <person name="Bates K."/>
            <person name="Beasley H."/>
            <person name="Bray-Allen S."/>
            <person name="Brown A.J."/>
            <person name="Brown J.Y."/>
            <person name="Burford D.C."/>
            <person name="Burrill W."/>
            <person name="Burton J."/>
            <person name="Cahill P."/>
            <person name="Camire D."/>
            <person name="Carter N.P."/>
            <person name="Chapman J.C."/>
            <person name="Clark S.Y."/>
            <person name="Clarke G."/>
            <person name="Clee C.M."/>
            <person name="Clegg S."/>
            <person name="Corby N."/>
            <person name="Coulson A."/>
            <person name="Dhami P."/>
            <person name="Dutta I."/>
            <person name="Dunn M."/>
            <person name="Faulkner L."/>
            <person name="Frankish A."/>
            <person name="Frankland J.A."/>
            <person name="Garner P."/>
            <person name="Garnett J."/>
            <person name="Gribble S."/>
            <person name="Griffiths C."/>
            <person name="Grocock R."/>
            <person name="Gustafson E."/>
            <person name="Hammond S."/>
            <person name="Harley J.L."/>
            <person name="Hart E."/>
            <person name="Heath P.D."/>
            <person name="Ho T.P."/>
            <person name="Hopkins B."/>
            <person name="Horne J."/>
            <person name="Howden P.J."/>
            <person name="Huckle E."/>
            <person name="Hynds C."/>
            <person name="Johnson C."/>
            <person name="Johnson D."/>
            <person name="Kana A."/>
            <person name="Kay M."/>
            <person name="Kimberley A.M."/>
            <person name="Kershaw J.K."/>
            <person name="Kokkinaki M."/>
            <person name="Laird G.K."/>
            <person name="Lawlor S."/>
            <person name="Lee H.M."/>
            <person name="Leongamornlert D.A."/>
            <person name="Laird G."/>
            <person name="Lloyd C."/>
            <person name="Lloyd D.M."/>
            <person name="Loveland J."/>
            <person name="Lovell J."/>
            <person name="McLaren S."/>
            <person name="McLay K.E."/>
            <person name="McMurray A."/>
            <person name="Mashreghi-Mohammadi M."/>
            <person name="Matthews L."/>
            <person name="Milne S."/>
            <person name="Nickerson T."/>
            <person name="Nguyen M."/>
            <person name="Overton-Larty E."/>
            <person name="Palmer S.A."/>
            <person name="Pearce A.V."/>
            <person name="Peck A.I."/>
            <person name="Pelan S."/>
            <person name="Phillimore B."/>
            <person name="Porter K."/>
            <person name="Rice C.M."/>
            <person name="Rogosin A."/>
            <person name="Ross M.T."/>
            <person name="Sarafidou T."/>
            <person name="Sehra H.K."/>
            <person name="Shownkeen R."/>
            <person name="Skuce C.D."/>
            <person name="Smith M."/>
            <person name="Standring L."/>
            <person name="Sycamore N."/>
            <person name="Tester J."/>
            <person name="Thorpe A."/>
            <person name="Torcasso W."/>
            <person name="Tracey A."/>
            <person name="Tromans A."/>
            <person name="Tsolas J."/>
            <person name="Wall M."/>
            <person name="Walsh J."/>
            <person name="Wang H."/>
            <person name="Weinstock K."/>
            <person name="West A.P."/>
            <person name="Willey D.L."/>
            <person name="Whitehead S.L."/>
            <person name="Wilming L."/>
            <person name="Wray P.W."/>
            <person name="Young L."/>
            <person name="Chen Y."/>
            <person name="Lovering R.C."/>
            <person name="Moschonas N.K."/>
            <person name="Siebert R."/>
            <person name="Fechtel K."/>
            <person name="Bentley D."/>
            <person name="Durbin R.M."/>
            <person name="Hubbard T."/>
            <person name="Doucette-Stamm L."/>
            <person name="Beck S."/>
            <person name="Smith D.R."/>
            <person name="Rogers J."/>
        </authorList>
    </citation>
    <scope>NUCLEOTIDE SEQUENCE [LARGE SCALE GENOMIC DNA]</scope>
</reference>
<reference key="7">
    <citation type="submission" date="2005-09" db="EMBL/GenBank/DDBJ databases">
        <authorList>
            <person name="Mural R.J."/>
            <person name="Istrail S."/>
            <person name="Sutton G.G."/>
            <person name="Florea L."/>
            <person name="Halpern A.L."/>
            <person name="Mobarry C.M."/>
            <person name="Lippert R."/>
            <person name="Walenz B."/>
            <person name="Shatkay H."/>
            <person name="Dew I."/>
            <person name="Miller J.R."/>
            <person name="Flanigan M.J."/>
            <person name="Edwards N.J."/>
            <person name="Bolanos R."/>
            <person name="Fasulo D."/>
            <person name="Halldorsson B.V."/>
            <person name="Hannenhalli S."/>
            <person name="Turner R."/>
            <person name="Yooseph S."/>
            <person name="Lu F."/>
            <person name="Nusskern D.R."/>
            <person name="Shue B.C."/>
            <person name="Zheng X.H."/>
            <person name="Zhong F."/>
            <person name="Delcher A.L."/>
            <person name="Huson D.H."/>
            <person name="Kravitz S.A."/>
            <person name="Mouchard L."/>
            <person name="Reinert K."/>
            <person name="Remington K.A."/>
            <person name="Clark A.G."/>
            <person name="Waterman M.S."/>
            <person name="Eichler E.E."/>
            <person name="Adams M.D."/>
            <person name="Hunkapiller M.W."/>
            <person name="Myers E.W."/>
            <person name="Venter J.C."/>
        </authorList>
    </citation>
    <scope>NUCLEOTIDE SEQUENCE [LARGE SCALE GENOMIC DNA]</scope>
</reference>
<reference key="8">
    <citation type="journal article" date="2004" name="Genome Res.">
        <title>The status, quality, and expansion of the NIH full-length cDNA project: the Mammalian Gene Collection (MGC).</title>
        <authorList>
            <consortium name="The MGC Project Team"/>
        </authorList>
    </citation>
    <scope>NUCLEOTIDE SEQUENCE [LARGE SCALE MRNA] (ISOFORM 1)</scope>
    <scope>VARIANTS HIS-221; ARG-419 AND ASN-546</scope>
</reference>
<reference key="9">
    <citation type="journal article" date="2008" name="Genes Dev.">
        <title>Degradation of histone mRNA requires oligouridylation followed by decapping and simultaneous degradation of the mRNA both 5' to 3' and 3' to 5'.</title>
        <authorList>
            <person name="Mullen T.E."/>
            <person name="Marzluff W.F."/>
        </authorList>
    </citation>
    <scope>FUNCTION IN HISTONE MRNA DEGRADATION ACTIVITY</scope>
    <scope>SUBCELLULAR LOCATION</scope>
</reference>
<reference key="10">
    <citation type="journal article" date="2009" name="Science">
        <title>Lysine acetylation targets protein complexes and co-regulates major cellular functions.</title>
        <authorList>
            <person name="Choudhary C."/>
            <person name="Kumar C."/>
            <person name="Gnad F."/>
            <person name="Nielsen M.L."/>
            <person name="Rehman M."/>
            <person name="Walther T.C."/>
            <person name="Olsen J.V."/>
            <person name="Mann M."/>
        </authorList>
    </citation>
    <scope>ACETYLATION [LARGE SCALE ANALYSIS] AT LYS-90</scope>
    <scope>IDENTIFICATION BY MASS SPECTROMETRY [LARGE SCALE ANALYSIS]</scope>
</reference>
<reference key="11">
    <citation type="journal article" date="2011" name="BMC Syst. Biol.">
        <title>Initial characterization of the human central proteome.</title>
        <authorList>
            <person name="Burkard T.R."/>
            <person name="Planyavsky M."/>
            <person name="Kaupe I."/>
            <person name="Breitwieser F.P."/>
            <person name="Buerckstuemmer T."/>
            <person name="Bennett K.L."/>
            <person name="Superti-Furga G."/>
            <person name="Colinge J."/>
        </authorList>
    </citation>
    <scope>IDENTIFICATION BY MASS SPECTROMETRY [LARGE SCALE ANALYSIS]</scope>
</reference>
<reference key="12">
    <citation type="journal article" date="2011" name="Mol. Cell">
        <title>Structural basis for dimerization and activity of human PAPD1, a noncanonical poly(A) polymerase.</title>
        <authorList>
            <person name="Bai Y."/>
            <person name="Srivastava S.K."/>
            <person name="Chang J.H."/>
            <person name="Manley J.L."/>
            <person name="Tong L."/>
        </authorList>
    </citation>
    <scope>X-RAY CRYSTALLOGRAPHY (3.1 ANGSTROMS) OF 44-538</scope>
    <scope>FUNCTION</scope>
    <scope>CATALYTIC ACTIVITY</scope>
    <scope>SUBUNIT</scope>
    <scope>COFACTOR</scope>
    <scope>BIOPHYSICOCHEMICAL PROPERTIES</scope>
    <scope>MUTAGENESIS OF 221-TYR-PHE-222; PHE-230; 259-HIS--ILE-261; 294-HIS--PRO-297; LEU-312; ASP-325 AND PHE-378</scope>
</reference>
<reference key="13">
    <citation type="journal article" date="2010" name="Am. J. Hum. Genet.">
        <title>Defective mitochondrial mRNA maturation is associated with spastic ataxia.</title>
        <authorList>
            <person name="Crosby A.H."/>
            <person name="Patel H."/>
            <person name="Chioza B.A."/>
            <person name="Proukakis C."/>
            <person name="Gurtz K."/>
            <person name="Patton M.A."/>
            <person name="Sharifi R."/>
            <person name="Harlalka G."/>
            <person name="Simpson M.A."/>
            <person name="Dick K."/>
            <person name="Reed J.A."/>
            <person name="Al-Memar A."/>
            <person name="Chrzanowska-Lightowlers Z.M."/>
            <person name="Cross H.E."/>
            <person name="Lightowlers R.N."/>
        </authorList>
    </citation>
    <scope>VARIANT SPAX4 ASP-478</scope>
    <scope>CATALYTIC ACTIVITY</scope>
    <scope>FUNCTION</scope>
</reference>
<evidence type="ECO:0000250" key="1"/>
<evidence type="ECO:0000255" key="2"/>
<evidence type="ECO:0000269" key="3">
    <source>
    </source>
</evidence>
<evidence type="ECO:0000269" key="4">
    <source>
    </source>
</evidence>
<evidence type="ECO:0000269" key="5">
    <source>
    </source>
</evidence>
<evidence type="ECO:0000269" key="6">
    <source>
    </source>
</evidence>
<evidence type="ECO:0000269" key="7">
    <source>
    </source>
</evidence>
<evidence type="ECO:0000269" key="8">
    <source>
    </source>
</evidence>
<evidence type="ECO:0000303" key="9">
    <source>
    </source>
</evidence>
<evidence type="ECO:0000305" key="10"/>
<evidence type="ECO:0007744" key="11">
    <source>
    </source>
</evidence>
<evidence type="ECO:0007829" key="12">
    <source>
        <dbReference type="PDB" id="3PQ1"/>
    </source>
</evidence>
<organism>
    <name type="scientific">Homo sapiens</name>
    <name type="common">Human</name>
    <dbReference type="NCBI Taxonomy" id="9606"/>
    <lineage>
        <taxon>Eukaryota</taxon>
        <taxon>Metazoa</taxon>
        <taxon>Chordata</taxon>
        <taxon>Craniata</taxon>
        <taxon>Vertebrata</taxon>
        <taxon>Euteleostomi</taxon>
        <taxon>Mammalia</taxon>
        <taxon>Eutheria</taxon>
        <taxon>Euarchontoglires</taxon>
        <taxon>Primates</taxon>
        <taxon>Haplorrhini</taxon>
        <taxon>Catarrhini</taxon>
        <taxon>Hominidae</taxon>
        <taxon>Homo</taxon>
    </lineage>
</organism>
<accession>Q9NVV4</accession>
<accession>D3DRX0</accession>
<accession>Q659E3</accession>
<accession>Q6P7E5</accession>
<accession>Q9HA74</accession>
<name>PAPD1_HUMAN</name>